<sequence>MSNAEDHAGTRRDFLYYATAGAGAVATGAAVWPLINQMNPSADVQALASIFVDVSSVEPGVQLTVKFLGKPIFIRRRTEADIELGRSVQLGQLVDTNARNANIDAGAEATDQNRTLDEAGEWLVMWGVCTHLGCVPIGGVSGDFGGWFCPCHGSHYDSAGRIRKGPAPENLPIPLAKFIDETTIQLG</sequence>
<dbReference type="EC" id="7.1.1.8"/>
<dbReference type="EMBL" id="X56157">
    <property type="protein sequence ID" value="CAA39623.1"/>
    <property type="molecule type" value="Genomic_DNA"/>
</dbReference>
<dbReference type="EMBL" id="M18577">
    <property type="protein sequence ID" value="AAA26150.1"/>
    <property type="molecule type" value="Genomic_DNA"/>
</dbReference>
<dbReference type="PIR" id="S13868">
    <property type="entry name" value="S13868"/>
</dbReference>
<dbReference type="RefSeq" id="WP_002722009.1">
    <property type="nucleotide sequence ID" value="NZ_WTFI01000004.1"/>
</dbReference>
<dbReference type="PDB" id="2FYN">
    <property type="method" value="X-ray"/>
    <property type="resolution" value="3.20 A"/>
    <property type="chains" value="C/F/I/L/O/R=1-187"/>
</dbReference>
<dbReference type="PDB" id="2NUK">
    <property type="method" value="X-ray"/>
    <property type="resolution" value="1.20 A"/>
    <property type="chains" value="A=47-187"/>
</dbReference>
<dbReference type="PDB" id="2NUM">
    <property type="method" value="X-ray"/>
    <property type="resolution" value="1.50 A"/>
    <property type="chains" value="A=47-187"/>
</dbReference>
<dbReference type="PDB" id="2NVE">
    <property type="method" value="X-ray"/>
    <property type="resolution" value="1.50 A"/>
    <property type="chains" value="A=47-187"/>
</dbReference>
<dbReference type="PDB" id="2NVF">
    <property type="method" value="X-ray"/>
    <property type="resolution" value="1.50 A"/>
    <property type="chains" value="A=47-187"/>
</dbReference>
<dbReference type="PDB" id="2NVG">
    <property type="method" value="X-ray"/>
    <property type="resolution" value="1.35 A"/>
    <property type="chains" value="A=47-187"/>
</dbReference>
<dbReference type="PDB" id="2NWF">
    <property type="method" value="X-ray"/>
    <property type="resolution" value="1.10 A"/>
    <property type="chains" value="A=47-187"/>
</dbReference>
<dbReference type="PDB" id="2QJK">
    <property type="method" value="X-ray"/>
    <property type="resolution" value="3.10 A"/>
    <property type="chains" value="C/F/I/L/O/R=9-187"/>
</dbReference>
<dbReference type="PDB" id="2QJP">
    <property type="method" value="X-ray"/>
    <property type="resolution" value="2.60 A"/>
    <property type="chains" value="C/F/I/L=9-187"/>
</dbReference>
<dbReference type="PDB" id="2QJY">
    <property type="method" value="X-ray"/>
    <property type="resolution" value="2.40 A"/>
    <property type="chains" value="C/F/I/L/O/R=1-187"/>
</dbReference>
<dbReference type="PDB" id="5KKZ">
    <property type="method" value="X-ray"/>
    <property type="resolution" value="2.97 A"/>
    <property type="chains" value="C/G/M/Q=1-187"/>
</dbReference>
<dbReference type="PDB" id="5KLI">
    <property type="method" value="X-ray"/>
    <property type="resolution" value="3.00 A"/>
    <property type="chains" value="C/G/M/Q=1-187"/>
</dbReference>
<dbReference type="PDB" id="7TCE">
    <property type="method" value="X-ray"/>
    <property type="resolution" value="3.85 A"/>
    <property type="chains" value="C/G/M/Q=1-187"/>
</dbReference>
<dbReference type="PDB" id="7TLJ">
    <property type="method" value="EM"/>
    <property type="resolution" value="2.91 A"/>
    <property type="chains" value="C/G=1-187"/>
</dbReference>
<dbReference type="PDBsum" id="2FYN"/>
<dbReference type="PDBsum" id="2NUK"/>
<dbReference type="PDBsum" id="2NUM"/>
<dbReference type="PDBsum" id="2NVE"/>
<dbReference type="PDBsum" id="2NVF"/>
<dbReference type="PDBsum" id="2NVG"/>
<dbReference type="PDBsum" id="2NWF"/>
<dbReference type="PDBsum" id="2QJK"/>
<dbReference type="PDBsum" id="2QJP"/>
<dbReference type="PDBsum" id="2QJY"/>
<dbReference type="PDBsum" id="5KKZ"/>
<dbReference type="PDBsum" id="5KLI"/>
<dbReference type="PDBsum" id="7TCE"/>
<dbReference type="PDBsum" id="7TLJ"/>
<dbReference type="EMDB" id="EMD-25989"/>
<dbReference type="SMR" id="Q02762"/>
<dbReference type="DIP" id="DIP-61258N"/>
<dbReference type="IntAct" id="Q02762">
    <property type="interactions" value="1"/>
</dbReference>
<dbReference type="DrugBank" id="DB03152">
    <property type="generic name" value="B-2-Octylglucoside"/>
</dbReference>
<dbReference type="DrugBank" id="DB08690">
    <property type="generic name" value="Ubiquinone Q2"/>
</dbReference>
<dbReference type="TCDB" id="3.E.2.1.1">
    <property type="family name" value="the photosynthetic reaction center (prc) family"/>
</dbReference>
<dbReference type="GeneID" id="67448165"/>
<dbReference type="OMA" id="KRTWLIA"/>
<dbReference type="EvolutionaryTrace" id="Q02762"/>
<dbReference type="GO" id="GO:0005886">
    <property type="term" value="C:plasma membrane"/>
    <property type="evidence" value="ECO:0007669"/>
    <property type="project" value="UniProtKB-SubCell"/>
</dbReference>
<dbReference type="GO" id="GO:0051537">
    <property type="term" value="F:2 iron, 2 sulfur cluster binding"/>
    <property type="evidence" value="ECO:0007669"/>
    <property type="project" value="UniProtKB-KW"/>
</dbReference>
<dbReference type="GO" id="GO:0046872">
    <property type="term" value="F:metal ion binding"/>
    <property type="evidence" value="ECO:0007669"/>
    <property type="project" value="UniProtKB-KW"/>
</dbReference>
<dbReference type="GO" id="GO:0008121">
    <property type="term" value="F:ubiquinol-cytochrome-c reductase activity"/>
    <property type="evidence" value="ECO:0007669"/>
    <property type="project" value="UniProtKB-EC"/>
</dbReference>
<dbReference type="CDD" id="cd03470">
    <property type="entry name" value="Rieske_cytochrome_bc1"/>
    <property type="match status" value="1"/>
</dbReference>
<dbReference type="FunFam" id="2.102.10.10:FF:000001">
    <property type="entry name" value="Cytochrome b-c1 complex subunit Rieske, mitochondrial"/>
    <property type="match status" value="1"/>
</dbReference>
<dbReference type="Gene3D" id="2.102.10.10">
    <property type="entry name" value="Rieske [2Fe-2S] iron-sulphur domain"/>
    <property type="match status" value="1"/>
</dbReference>
<dbReference type="Gene3D" id="1.20.5.510">
    <property type="entry name" value="Single helix bin"/>
    <property type="match status" value="1"/>
</dbReference>
<dbReference type="InterPro" id="IPR017941">
    <property type="entry name" value="Rieske_2Fe-2S"/>
</dbReference>
<dbReference type="InterPro" id="IPR036922">
    <property type="entry name" value="Rieske_2Fe-2S_sf"/>
</dbReference>
<dbReference type="InterPro" id="IPR014349">
    <property type="entry name" value="Rieske_Fe-S_prot"/>
</dbReference>
<dbReference type="InterPro" id="IPR005805">
    <property type="entry name" value="Rieske_Fe-S_prot_C"/>
</dbReference>
<dbReference type="InterPro" id="IPR006311">
    <property type="entry name" value="TAT_signal"/>
</dbReference>
<dbReference type="InterPro" id="IPR019546">
    <property type="entry name" value="TAT_signal_bac_arc"/>
</dbReference>
<dbReference type="InterPro" id="IPR019470">
    <property type="entry name" value="Ubiq_cytC_Rdtase_Fe-S_su_TAT"/>
</dbReference>
<dbReference type="InterPro" id="IPR006317">
    <property type="entry name" value="Ubiquinol_cyt_c_Rdtase_Fe-S-su"/>
</dbReference>
<dbReference type="NCBIfam" id="TIGR01416">
    <property type="entry name" value="Rieske_proteo"/>
    <property type="match status" value="1"/>
</dbReference>
<dbReference type="NCBIfam" id="TIGR01409">
    <property type="entry name" value="TAT_signal_seq"/>
    <property type="match status" value="1"/>
</dbReference>
<dbReference type="PANTHER" id="PTHR10134">
    <property type="entry name" value="CYTOCHROME B-C1 COMPLEX SUBUNIT RIESKE, MITOCHONDRIAL"/>
    <property type="match status" value="1"/>
</dbReference>
<dbReference type="Pfam" id="PF00355">
    <property type="entry name" value="Rieske"/>
    <property type="match status" value="1"/>
</dbReference>
<dbReference type="Pfam" id="PF10399">
    <property type="entry name" value="UCR_Fe-S_N"/>
    <property type="match status" value="1"/>
</dbReference>
<dbReference type="PRINTS" id="PR00162">
    <property type="entry name" value="RIESKE"/>
</dbReference>
<dbReference type="SUPFAM" id="SSF50022">
    <property type="entry name" value="ISP domain"/>
    <property type="match status" value="1"/>
</dbReference>
<dbReference type="PROSITE" id="PS51296">
    <property type="entry name" value="RIESKE"/>
    <property type="match status" value="1"/>
</dbReference>
<dbReference type="PROSITE" id="PS51318">
    <property type="entry name" value="TAT"/>
    <property type="match status" value="1"/>
</dbReference>
<feature type="chain" id="PRO_0000127764" description="Ubiquinol-cytochrome c reductase iron-sulfur subunit">
    <location>
        <begin position="1"/>
        <end position="187"/>
    </location>
</feature>
<feature type="transmembrane region" description="Helical" evidence="1">
    <location>
        <begin position="15"/>
        <end position="35"/>
    </location>
</feature>
<feature type="domain" description="Rieske" evidence="2">
    <location>
        <begin position="89"/>
        <end position="185"/>
    </location>
</feature>
<feature type="binding site" evidence="2">
    <location>
        <position position="129"/>
    </location>
    <ligand>
        <name>[2Fe-2S] cluster</name>
        <dbReference type="ChEBI" id="CHEBI:190135"/>
    </ligand>
</feature>
<feature type="binding site" evidence="2">
    <location>
        <position position="131"/>
    </location>
    <ligand>
        <name>[2Fe-2S] cluster</name>
        <dbReference type="ChEBI" id="CHEBI:190135"/>
    </ligand>
</feature>
<feature type="binding site" evidence="2">
    <location>
        <position position="149"/>
    </location>
    <ligand>
        <name>[2Fe-2S] cluster</name>
        <dbReference type="ChEBI" id="CHEBI:190135"/>
    </ligand>
</feature>
<feature type="binding site" evidence="2">
    <location>
        <position position="152"/>
    </location>
    <ligand>
        <name>[2Fe-2S] cluster</name>
        <dbReference type="ChEBI" id="CHEBI:190135"/>
    </ligand>
</feature>
<feature type="disulfide bond" evidence="2">
    <location>
        <begin position="134"/>
        <end position="151"/>
    </location>
</feature>
<feature type="helix" evidence="6">
    <location>
        <begin position="10"/>
        <end position="36"/>
    </location>
</feature>
<feature type="turn" evidence="6">
    <location>
        <begin position="42"/>
        <end position="44"/>
    </location>
</feature>
<feature type="strand" evidence="4">
    <location>
        <begin position="50"/>
        <end position="53"/>
    </location>
</feature>
<feature type="strand" evidence="4">
    <location>
        <begin position="61"/>
        <end position="67"/>
    </location>
</feature>
<feature type="strand" evidence="4">
    <location>
        <begin position="70"/>
        <end position="76"/>
    </location>
</feature>
<feature type="helix" evidence="4">
    <location>
        <begin position="79"/>
        <end position="86"/>
    </location>
</feature>
<feature type="helix" evidence="4">
    <location>
        <begin position="90"/>
        <end position="92"/>
    </location>
</feature>
<feature type="strand" evidence="5">
    <location>
        <begin position="100"/>
        <end position="103"/>
    </location>
</feature>
<feature type="helix" evidence="4">
    <location>
        <begin position="111"/>
        <end position="114"/>
    </location>
</feature>
<feature type="strand" evidence="4">
    <location>
        <begin position="115"/>
        <end position="117"/>
    </location>
</feature>
<feature type="strand" evidence="4">
    <location>
        <begin position="122"/>
        <end position="126"/>
    </location>
</feature>
<feature type="turn" evidence="4">
    <location>
        <begin position="130"/>
        <end position="132"/>
    </location>
</feature>
<feature type="strand" evidence="4">
    <location>
        <begin position="137"/>
        <end position="141"/>
    </location>
</feature>
<feature type="turn" evidence="4">
    <location>
        <begin position="142"/>
        <end position="145"/>
    </location>
</feature>
<feature type="strand" evidence="4">
    <location>
        <begin position="146"/>
        <end position="149"/>
    </location>
</feature>
<feature type="turn" evidence="4">
    <location>
        <begin position="150"/>
        <end position="153"/>
    </location>
</feature>
<feature type="strand" evidence="4">
    <location>
        <begin position="154"/>
        <end position="156"/>
    </location>
</feature>
<feature type="strand" evidence="4">
    <location>
        <begin position="162"/>
        <end position="166"/>
    </location>
</feature>
<feature type="strand" evidence="4">
    <location>
        <begin position="175"/>
        <end position="186"/>
    </location>
</feature>
<comment type="function">
    <text>Component of the ubiquinol-cytochrome c reductase complex (complex III or cytochrome b-c1 complex), which is a respiratory chain that generates an electrochemical potential coupled to ATP synthesis.</text>
</comment>
<comment type="catalytic activity">
    <reaction>
        <text>a quinol + 2 Fe(III)-[cytochrome c](out) = a quinone + 2 Fe(II)-[cytochrome c](out) + 2 H(+)(out)</text>
        <dbReference type="Rhea" id="RHEA:11484"/>
        <dbReference type="Rhea" id="RHEA-COMP:10350"/>
        <dbReference type="Rhea" id="RHEA-COMP:14399"/>
        <dbReference type="ChEBI" id="CHEBI:15378"/>
        <dbReference type="ChEBI" id="CHEBI:24646"/>
        <dbReference type="ChEBI" id="CHEBI:29033"/>
        <dbReference type="ChEBI" id="CHEBI:29034"/>
        <dbReference type="ChEBI" id="CHEBI:132124"/>
        <dbReference type="EC" id="7.1.1.8"/>
    </reaction>
</comment>
<comment type="cofactor">
    <cofactor evidence="2">
        <name>[2Fe-2S] cluster</name>
        <dbReference type="ChEBI" id="CHEBI:190135"/>
    </cofactor>
    <text evidence="2">Binds 1 [2Fe-2S] cluster per subunit.</text>
</comment>
<comment type="subunit">
    <text>The main subunits of complex b-c1 are: cytochrome b, cytochrome c1 and the Rieske protein.</text>
</comment>
<comment type="subcellular location">
    <subcellularLocation>
        <location>Cell membrane</location>
        <topology>Single-pass membrane protein</topology>
    </subcellularLocation>
</comment>
<comment type="miscellaneous">
    <text>The Rieske protein is a high potential 2Fe-2S protein.</text>
</comment>
<comment type="similarity">
    <text evidence="3">Belongs to the Rieske iron-sulfur protein family.</text>
</comment>
<accession>Q02762</accession>
<accession>P72327</accession>
<reference key="1">
    <citation type="journal article" date="1990" name="Eur. J. Biochem.">
        <title>Cloning and DNA sequencing of the fbc operon encoding the cytochrome bc1 complex from Rhodobacter sphaeroides. Characterization of fbc deletion mutants and complementation by a site-specific mutational variant.</title>
        <authorList>
            <person name="Yun C.-H."/>
            <person name="Beci R."/>
            <person name="Crofts A.R."/>
            <person name="Kaplan S."/>
            <person name="Gennis R.B."/>
        </authorList>
    </citation>
    <scope>NUCLEOTIDE SEQUENCE [GENOMIC DNA]</scope>
</reference>
<reference key="2">
    <citation type="journal article" date="1987" name="J. Mol. Biol.">
        <title>fbc operon, encoding the Rieske Fe-S protein cytochrome b, and cytochrome c1 apoproteins previously described from Rhodopseudomonas sphaeroides, is from Rhodopseudomonas capsulata.</title>
        <authorList>
            <person name="Davidson E."/>
            <person name="Daldal F."/>
        </authorList>
    </citation>
    <scope>NUCLEOTIDE SEQUENCE [GENOMIC DNA] OF 1-95</scope>
</reference>
<name>UCRI_CERSP</name>
<keyword id="KW-0001">2Fe-2S</keyword>
<keyword id="KW-0002">3D-structure</keyword>
<keyword id="KW-1003">Cell membrane</keyword>
<keyword id="KW-1015">Disulfide bond</keyword>
<keyword id="KW-0249">Electron transport</keyword>
<keyword id="KW-0408">Iron</keyword>
<keyword id="KW-0411">Iron-sulfur</keyword>
<keyword id="KW-0472">Membrane</keyword>
<keyword id="KW-0479">Metal-binding</keyword>
<keyword id="KW-1278">Translocase</keyword>
<keyword id="KW-0812">Transmembrane</keyword>
<keyword id="KW-1133">Transmembrane helix</keyword>
<keyword id="KW-0813">Transport</keyword>
<organism>
    <name type="scientific">Cereibacter sphaeroides</name>
    <name type="common">Rhodobacter sphaeroides</name>
    <dbReference type="NCBI Taxonomy" id="1063"/>
    <lineage>
        <taxon>Bacteria</taxon>
        <taxon>Pseudomonadati</taxon>
        <taxon>Pseudomonadota</taxon>
        <taxon>Alphaproteobacteria</taxon>
        <taxon>Rhodobacterales</taxon>
        <taxon>Paracoccaceae</taxon>
        <taxon>Cereibacter</taxon>
    </lineage>
</organism>
<gene>
    <name type="primary">petA</name>
    <name type="synonym">fbcF</name>
</gene>
<protein>
    <recommendedName>
        <fullName>Ubiquinol-cytochrome c reductase iron-sulfur subunit</fullName>
        <ecNumber>7.1.1.8</ecNumber>
    </recommendedName>
    <alternativeName>
        <fullName>Rieske iron-sulfur protein</fullName>
        <shortName>RISP</shortName>
    </alternativeName>
</protein>
<proteinExistence type="evidence at protein level"/>
<evidence type="ECO:0000255" key="1"/>
<evidence type="ECO:0000255" key="2">
    <source>
        <dbReference type="PROSITE-ProRule" id="PRU00628"/>
    </source>
</evidence>
<evidence type="ECO:0000305" key="3"/>
<evidence type="ECO:0007829" key="4">
    <source>
        <dbReference type="PDB" id="2NWF"/>
    </source>
</evidence>
<evidence type="ECO:0007829" key="5">
    <source>
        <dbReference type="PDB" id="2QJP"/>
    </source>
</evidence>
<evidence type="ECO:0007829" key="6">
    <source>
        <dbReference type="PDB" id="2QJY"/>
    </source>
</evidence>